<organism>
    <name type="scientific">Yersinia pseudotuberculosis serotype I (strain IP32953)</name>
    <dbReference type="NCBI Taxonomy" id="273123"/>
    <lineage>
        <taxon>Bacteria</taxon>
        <taxon>Pseudomonadati</taxon>
        <taxon>Pseudomonadota</taxon>
        <taxon>Gammaproteobacteria</taxon>
        <taxon>Enterobacterales</taxon>
        <taxon>Yersiniaceae</taxon>
        <taxon>Yersinia</taxon>
    </lineage>
</organism>
<keyword id="KW-0067">ATP-binding</keyword>
<keyword id="KW-0963">Cytoplasm</keyword>
<keyword id="KW-0547">Nucleotide-binding</keyword>
<keyword id="KW-0548">Nucleotidyltransferase</keyword>
<keyword id="KW-0808">Transferase</keyword>
<keyword id="KW-0819">tRNA processing</keyword>
<accession>Q664V8</accession>
<gene>
    <name evidence="1" type="primary">tsaC</name>
    <name type="synonym">rimN</name>
    <name type="ordered locus">YPTB3661</name>
</gene>
<comment type="function">
    <text evidence="1">Required for the formation of a threonylcarbamoyl group on adenosine at position 37 (t(6)A37) in tRNAs that read codons beginning with adenine. Catalyzes the conversion of L-threonine, HCO(3)(-)/CO(2) and ATP to give threonylcarbamoyl-AMP (TC-AMP) as the acyladenylate intermediate, with the release of diphosphate.</text>
</comment>
<comment type="catalytic activity">
    <reaction evidence="1">
        <text>L-threonine + hydrogencarbonate + ATP = L-threonylcarbamoyladenylate + diphosphate + H2O</text>
        <dbReference type="Rhea" id="RHEA:36407"/>
        <dbReference type="ChEBI" id="CHEBI:15377"/>
        <dbReference type="ChEBI" id="CHEBI:17544"/>
        <dbReference type="ChEBI" id="CHEBI:30616"/>
        <dbReference type="ChEBI" id="CHEBI:33019"/>
        <dbReference type="ChEBI" id="CHEBI:57926"/>
        <dbReference type="ChEBI" id="CHEBI:73682"/>
        <dbReference type="EC" id="2.7.7.87"/>
    </reaction>
</comment>
<comment type="subcellular location">
    <subcellularLocation>
        <location evidence="1">Cytoplasm</location>
    </subcellularLocation>
</comment>
<comment type="similarity">
    <text evidence="1">Belongs to the SUA5 family. TsaC subfamily.</text>
</comment>
<evidence type="ECO:0000255" key="1">
    <source>
        <dbReference type="HAMAP-Rule" id="MF_01852"/>
    </source>
</evidence>
<feature type="chain" id="PRO_0000353027" description="Threonylcarbamoyl-AMP synthase">
    <location>
        <begin position="1"/>
        <end position="190"/>
    </location>
</feature>
<feature type="domain" description="YrdC-like" evidence="1">
    <location>
        <begin position="7"/>
        <end position="190"/>
    </location>
</feature>
<proteinExistence type="inferred from homology"/>
<name>TSAC_YERPS</name>
<sequence length="190" mass="21153">MNQQENNFVLADIVRALRQEEVIAYPTEAVFGLGCDPDSEKAVNTLLALKQRPWQKGLILVAANYAQLEPYINDSMLNEIQRETLFSTWPGPITWVIPARVETPQWLTGCFDSLAVRVSNHPLVQQLCAEYGKPLVSTSANLSGHEPCRTEEEVRIQFGPSLPVLSGHVGGRLNPSEIRDALTGKRFRQG</sequence>
<reference key="1">
    <citation type="journal article" date="2004" name="Proc. Natl. Acad. Sci. U.S.A.">
        <title>Insights into the evolution of Yersinia pestis through whole-genome comparison with Yersinia pseudotuberculosis.</title>
        <authorList>
            <person name="Chain P.S.G."/>
            <person name="Carniel E."/>
            <person name="Larimer F.W."/>
            <person name="Lamerdin J."/>
            <person name="Stoutland P.O."/>
            <person name="Regala W.M."/>
            <person name="Georgescu A.M."/>
            <person name="Vergez L.M."/>
            <person name="Land M.L."/>
            <person name="Motin V.L."/>
            <person name="Brubaker R.R."/>
            <person name="Fowler J."/>
            <person name="Hinnebusch J."/>
            <person name="Marceau M."/>
            <person name="Medigue C."/>
            <person name="Simonet M."/>
            <person name="Chenal-Francisque V."/>
            <person name="Souza B."/>
            <person name="Dacheux D."/>
            <person name="Elliott J.M."/>
            <person name="Derbise A."/>
            <person name="Hauser L.J."/>
            <person name="Garcia E."/>
        </authorList>
    </citation>
    <scope>NUCLEOTIDE SEQUENCE [LARGE SCALE GENOMIC DNA]</scope>
    <source>
        <strain>IP32953</strain>
    </source>
</reference>
<protein>
    <recommendedName>
        <fullName evidence="1">Threonylcarbamoyl-AMP synthase</fullName>
        <shortName evidence="1">TC-AMP synthase</shortName>
        <ecNumber evidence="1">2.7.7.87</ecNumber>
    </recommendedName>
    <alternativeName>
        <fullName evidence="1">L-threonylcarbamoyladenylate synthase</fullName>
    </alternativeName>
    <alternativeName>
        <fullName evidence="1">t(6)A37 threonylcarbamoyladenosine biosynthesis protein TsaC</fullName>
    </alternativeName>
    <alternativeName>
        <fullName evidence="1">tRNA threonylcarbamoyladenosine biosynthesis protein TsaC</fullName>
    </alternativeName>
</protein>
<dbReference type="EC" id="2.7.7.87" evidence="1"/>
<dbReference type="EMBL" id="BX936398">
    <property type="protein sequence ID" value="CAH22899.1"/>
    <property type="molecule type" value="Genomic_DNA"/>
</dbReference>
<dbReference type="RefSeq" id="WP_002209025.1">
    <property type="nucleotide sequence ID" value="NZ_CP009712.1"/>
</dbReference>
<dbReference type="SMR" id="Q664V8"/>
<dbReference type="GeneID" id="57974358"/>
<dbReference type="KEGG" id="ypo:BZ17_2926"/>
<dbReference type="KEGG" id="yps:YPTB3661"/>
<dbReference type="PATRIC" id="fig|273123.14.peg.3067"/>
<dbReference type="Proteomes" id="UP000001011">
    <property type="component" value="Chromosome"/>
</dbReference>
<dbReference type="GO" id="GO:0005737">
    <property type="term" value="C:cytoplasm"/>
    <property type="evidence" value="ECO:0007669"/>
    <property type="project" value="UniProtKB-SubCell"/>
</dbReference>
<dbReference type="GO" id="GO:0005524">
    <property type="term" value="F:ATP binding"/>
    <property type="evidence" value="ECO:0007669"/>
    <property type="project" value="UniProtKB-UniRule"/>
</dbReference>
<dbReference type="GO" id="GO:0003725">
    <property type="term" value="F:double-stranded RNA binding"/>
    <property type="evidence" value="ECO:0007669"/>
    <property type="project" value="InterPro"/>
</dbReference>
<dbReference type="GO" id="GO:0061710">
    <property type="term" value="F:L-threonylcarbamoyladenylate synthase"/>
    <property type="evidence" value="ECO:0007669"/>
    <property type="project" value="UniProtKB-EC"/>
</dbReference>
<dbReference type="GO" id="GO:0000049">
    <property type="term" value="F:tRNA binding"/>
    <property type="evidence" value="ECO:0007669"/>
    <property type="project" value="TreeGrafter"/>
</dbReference>
<dbReference type="GO" id="GO:0006450">
    <property type="term" value="P:regulation of translational fidelity"/>
    <property type="evidence" value="ECO:0007669"/>
    <property type="project" value="TreeGrafter"/>
</dbReference>
<dbReference type="GO" id="GO:0002949">
    <property type="term" value="P:tRNA threonylcarbamoyladenosine modification"/>
    <property type="evidence" value="ECO:0007669"/>
    <property type="project" value="UniProtKB-UniRule"/>
</dbReference>
<dbReference type="FunFam" id="3.90.870.10:FF:000004">
    <property type="entry name" value="Threonylcarbamoyl-AMP synthase"/>
    <property type="match status" value="1"/>
</dbReference>
<dbReference type="Gene3D" id="3.90.870.10">
    <property type="entry name" value="DHBP synthase"/>
    <property type="match status" value="1"/>
</dbReference>
<dbReference type="HAMAP" id="MF_01852">
    <property type="entry name" value="TsaC"/>
    <property type="match status" value="1"/>
</dbReference>
<dbReference type="InterPro" id="IPR017945">
    <property type="entry name" value="DHBP_synth_RibB-like_a/b_dom"/>
</dbReference>
<dbReference type="InterPro" id="IPR006070">
    <property type="entry name" value="Sua5-like_dom"/>
</dbReference>
<dbReference type="InterPro" id="IPR023535">
    <property type="entry name" value="TC-AMP_synthase"/>
</dbReference>
<dbReference type="InterPro" id="IPR050156">
    <property type="entry name" value="TC-AMP_synthase_SUA5"/>
</dbReference>
<dbReference type="NCBIfam" id="NF007919">
    <property type="entry name" value="PRK10634.1"/>
    <property type="match status" value="1"/>
</dbReference>
<dbReference type="PANTHER" id="PTHR17490">
    <property type="entry name" value="SUA5"/>
    <property type="match status" value="1"/>
</dbReference>
<dbReference type="PANTHER" id="PTHR17490:SF18">
    <property type="entry name" value="THREONYLCARBAMOYL-AMP SYNTHASE"/>
    <property type="match status" value="1"/>
</dbReference>
<dbReference type="Pfam" id="PF01300">
    <property type="entry name" value="Sua5_yciO_yrdC"/>
    <property type="match status" value="1"/>
</dbReference>
<dbReference type="SUPFAM" id="SSF55821">
    <property type="entry name" value="YrdC/RibB"/>
    <property type="match status" value="1"/>
</dbReference>
<dbReference type="PROSITE" id="PS51163">
    <property type="entry name" value="YRDC"/>
    <property type="match status" value="1"/>
</dbReference>